<comment type="function">
    <text evidence="1">With S4 and S12 plays an important role in translational accuracy.</text>
</comment>
<comment type="function">
    <text evidence="1">Located at the back of the 30S subunit body where it stabilizes the conformation of the head with respect to the body.</text>
</comment>
<comment type="subunit">
    <text evidence="1">Part of the 30S ribosomal subunit. Contacts proteins S4 and S8.</text>
</comment>
<comment type="domain">
    <text>The N-terminal domain interacts with the head of the 30S subunit; the C-terminal domain interacts with the body and contacts protein S4. The interaction surface between S4 and S5 is involved in control of translational fidelity.</text>
</comment>
<comment type="similarity">
    <text evidence="1">Belongs to the universal ribosomal protein uS5 family.</text>
</comment>
<evidence type="ECO:0000255" key="1">
    <source>
        <dbReference type="HAMAP-Rule" id="MF_01307"/>
    </source>
</evidence>
<evidence type="ECO:0000305" key="2"/>
<keyword id="KW-1185">Reference proteome</keyword>
<keyword id="KW-0687">Ribonucleoprotein</keyword>
<keyword id="KW-0689">Ribosomal protein</keyword>
<keyword id="KW-0694">RNA-binding</keyword>
<keyword id="KW-0699">rRNA-binding</keyword>
<reference key="1">
    <citation type="journal article" date="2006" name="Nat. Biotechnol.">
        <title>The genome and transcriptomes of the anti-tumor agent Clostridium novyi-NT.</title>
        <authorList>
            <person name="Bettegowda C."/>
            <person name="Huang X."/>
            <person name="Lin J."/>
            <person name="Cheong I."/>
            <person name="Kohli M."/>
            <person name="Szabo S.A."/>
            <person name="Zhang X."/>
            <person name="Diaz L.A. Jr."/>
            <person name="Velculescu V.E."/>
            <person name="Parmigiani G."/>
            <person name="Kinzler K.W."/>
            <person name="Vogelstein B."/>
            <person name="Zhou S."/>
        </authorList>
    </citation>
    <scope>NUCLEOTIDE SEQUENCE [LARGE SCALE GENOMIC DNA]</scope>
    <source>
        <strain>NT</strain>
    </source>
</reference>
<organism>
    <name type="scientific">Clostridium novyi (strain NT)</name>
    <dbReference type="NCBI Taxonomy" id="386415"/>
    <lineage>
        <taxon>Bacteria</taxon>
        <taxon>Bacillati</taxon>
        <taxon>Bacillota</taxon>
        <taxon>Clostridia</taxon>
        <taxon>Eubacteriales</taxon>
        <taxon>Clostridiaceae</taxon>
        <taxon>Clostridium</taxon>
    </lineage>
</organism>
<name>RS5_CLONN</name>
<proteinExistence type="inferred from homology"/>
<protein>
    <recommendedName>
        <fullName evidence="1">Small ribosomal subunit protein uS5</fullName>
    </recommendedName>
    <alternativeName>
        <fullName evidence="2">30S ribosomal protein S5</fullName>
    </alternativeName>
</protein>
<feature type="chain" id="PRO_0000323111" description="Small ribosomal subunit protein uS5">
    <location>
        <begin position="1"/>
        <end position="165"/>
    </location>
</feature>
<feature type="domain" description="S5 DRBM" evidence="1">
    <location>
        <begin position="10"/>
        <end position="73"/>
    </location>
</feature>
<dbReference type="EMBL" id="CP000382">
    <property type="protein sequence ID" value="ABK61610.1"/>
    <property type="molecule type" value="Genomic_DNA"/>
</dbReference>
<dbReference type="RefSeq" id="WP_011721227.1">
    <property type="nucleotide sequence ID" value="NC_008593.1"/>
</dbReference>
<dbReference type="SMR" id="A0PXW3"/>
<dbReference type="STRING" id="386415.NT01CX_1132"/>
<dbReference type="KEGG" id="cno:NT01CX_1132"/>
<dbReference type="eggNOG" id="COG0098">
    <property type="taxonomic scope" value="Bacteria"/>
</dbReference>
<dbReference type="HOGENOM" id="CLU_065898_2_2_9"/>
<dbReference type="Proteomes" id="UP000008220">
    <property type="component" value="Chromosome"/>
</dbReference>
<dbReference type="GO" id="GO:0015935">
    <property type="term" value="C:small ribosomal subunit"/>
    <property type="evidence" value="ECO:0007669"/>
    <property type="project" value="InterPro"/>
</dbReference>
<dbReference type="GO" id="GO:0019843">
    <property type="term" value="F:rRNA binding"/>
    <property type="evidence" value="ECO:0007669"/>
    <property type="project" value="UniProtKB-UniRule"/>
</dbReference>
<dbReference type="GO" id="GO:0003735">
    <property type="term" value="F:structural constituent of ribosome"/>
    <property type="evidence" value="ECO:0007669"/>
    <property type="project" value="InterPro"/>
</dbReference>
<dbReference type="GO" id="GO:0006412">
    <property type="term" value="P:translation"/>
    <property type="evidence" value="ECO:0007669"/>
    <property type="project" value="UniProtKB-UniRule"/>
</dbReference>
<dbReference type="FunFam" id="3.30.160.20:FF:000001">
    <property type="entry name" value="30S ribosomal protein S5"/>
    <property type="match status" value="1"/>
</dbReference>
<dbReference type="FunFam" id="3.30.230.10:FF:000002">
    <property type="entry name" value="30S ribosomal protein S5"/>
    <property type="match status" value="1"/>
</dbReference>
<dbReference type="Gene3D" id="3.30.160.20">
    <property type="match status" value="1"/>
</dbReference>
<dbReference type="Gene3D" id="3.30.230.10">
    <property type="match status" value="1"/>
</dbReference>
<dbReference type="HAMAP" id="MF_01307_B">
    <property type="entry name" value="Ribosomal_uS5_B"/>
    <property type="match status" value="1"/>
</dbReference>
<dbReference type="InterPro" id="IPR020568">
    <property type="entry name" value="Ribosomal_Su5_D2-typ_SF"/>
</dbReference>
<dbReference type="InterPro" id="IPR000851">
    <property type="entry name" value="Ribosomal_uS5"/>
</dbReference>
<dbReference type="InterPro" id="IPR005712">
    <property type="entry name" value="Ribosomal_uS5_bac-type"/>
</dbReference>
<dbReference type="InterPro" id="IPR005324">
    <property type="entry name" value="Ribosomal_uS5_C"/>
</dbReference>
<dbReference type="InterPro" id="IPR013810">
    <property type="entry name" value="Ribosomal_uS5_N"/>
</dbReference>
<dbReference type="InterPro" id="IPR018192">
    <property type="entry name" value="Ribosomal_uS5_N_CS"/>
</dbReference>
<dbReference type="InterPro" id="IPR014721">
    <property type="entry name" value="Ribsml_uS5_D2-typ_fold_subgr"/>
</dbReference>
<dbReference type="NCBIfam" id="TIGR01021">
    <property type="entry name" value="rpsE_bact"/>
    <property type="match status" value="1"/>
</dbReference>
<dbReference type="PANTHER" id="PTHR48277">
    <property type="entry name" value="MITOCHONDRIAL RIBOSOMAL PROTEIN S5"/>
    <property type="match status" value="1"/>
</dbReference>
<dbReference type="PANTHER" id="PTHR48277:SF1">
    <property type="entry name" value="MITOCHONDRIAL RIBOSOMAL PROTEIN S5"/>
    <property type="match status" value="1"/>
</dbReference>
<dbReference type="Pfam" id="PF00333">
    <property type="entry name" value="Ribosomal_S5"/>
    <property type="match status" value="1"/>
</dbReference>
<dbReference type="Pfam" id="PF03719">
    <property type="entry name" value="Ribosomal_S5_C"/>
    <property type="match status" value="1"/>
</dbReference>
<dbReference type="SUPFAM" id="SSF54768">
    <property type="entry name" value="dsRNA-binding domain-like"/>
    <property type="match status" value="1"/>
</dbReference>
<dbReference type="SUPFAM" id="SSF54211">
    <property type="entry name" value="Ribosomal protein S5 domain 2-like"/>
    <property type="match status" value="1"/>
</dbReference>
<dbReference type="PROSITE" id="PS00585">
    <property type="entry name" value="RIBOSOMAL_S5"/>
    <property type="match status" value="1"/>
</dbReference>
<dbReference type="PROSITE" id="PS50881">
    <property type="entry name" value="S5_DSRBD"/>
    <property type="match status" value="1"/>
</dbReference>
<accession>A0PXW3</accession>
<sequence>MRIDPSTLNLKEKVVFINRVAKVVKGGRNFRFSALVVVGDENGHVGVGMGKAVEIPEAIRKGIEDAKKHLVEVAMVDTTVPHAIQGEFGRGRVLIMPATEGTGVIAGGPVRAVLELAGLKDVRAKSLGSNNPKNMVGATINGLSRLRTAEQIAKLRGKSVEEILG</sequence>
<gene>
    <name evidence="1" type="primary">rpsE</name>
    <name type="ordered locus">NT01CX_1132</name>
</gene>